<dbReference type="EMBL" id="AF022930">
    <property type="protein sequence ID" value="AAD01755.1"/>
    <property type="molecule type" value="Genomic_DNA"/>
</dbReference>
<dbReference type="RefSeq" id="YP_009167989.1">
    <property type="nucleotide sequence ID" value="NC_027983.1"/>
</dbReference>
<dbReference type="SMR" id="Q9ZXI0"/>
<dbReference type="GeneID" id="26041918"/>
<dbReference type="KEGG" id="vg:26041918"/>
<dbReference type="GO" id="GO:0019028">
    <property type="term" value="C:viral capsid"/>
    <property type="evidence" value="ECO:0007669"/>
    <property type="project" value="UniProtKB-UniRule"/>
</dbReference>
<dbReference type="HAMAP" id="MF_04117">
    <property type="entry name" value="CAPSID_H_T4"/>
    <property type="match status" value="1"/>
</dbReference>
<dbReference type="InterPro" id="IPR038997">
    <property type="entry name" value="CAPSID_Myoviridae"/>
</dbReference>
<dbReference type="InterPro" id="IPR010762">
    <property type="entry name" value="Gp23/Gp24_T4-like"/>
</dbReference>
<dbReference type="Pfam" id="PF07068">
    <property type="entry name" value="Gp23"/>
    <property type="match status" value="1"/>
</dbReference>
<name>CAPSH_BPAR1</name>
<keyword id="KW-0167">Capsid protein</keyword>
<keyword id="KW-0426">Late protein</keyword>
<keyword id="KW-0946">Virion</keyword>
<evidence type="ECO:0000250" key="1">
    <source>
        <dbReference type="UniProtKB" id="P04535"/>
    </source>
</evidence>
<evidence type="ECO:0000255" key="2">
    <source>
        <dbReference type="HAMAP-Rule" id="MF_04117"/>
    </source>
</evidence>
<evidence type="ECO:0000305" key="3"/>
<protein>
    <recommendedName>
        <fullName evidence="1 2">Major capsid protein</fullName>
    </recommendedName>
    <alternativeName>
        <fullName evidence="1">Gene product 23</fullName>
    </alternativeName>
    <alternativeName>
        <fullName evidence="2 3">Major head protein</fullName>
    </alternativeName>
    <alternativeName>
        <fullName evidence="1 2">gp23</fullName>
    </alternativeName>
    <component>
        <recommendedName>
            <fullName evidence="2 3">Mature major capsid protein</fullName>
        </recommendedName>
        <alternativeName>
            <fullName evidence="1 2">gp23*</fullName>
        </alternativeName>
    </component>
</protein>
<reference key="1">
    <citation type="journal article" date="1998" name="J. Biomed. Sci.">
        <title>Characterization of a phage specific to hemorrhagic Escherichia coli O157:H7 and disclosure of variations in host outer membrane protein ompC.</title>
        <authorList>
            <person name="Yu S.L."/>
            <person name="Ding H.C."/>
            <person name="Seah J.N."/>
            <person name="Wu K.M."/>
            <person name="Chang Y.C."/>
            <person name="Chang K.S."/>
            <person name="Tam M.F."/>
            <person name="Syu W.J."/>
        </authorList>
    </citation>
    <scope>NUCLEOTIDE SEQUENCE [GENOMIC DNA]</scope>
</reference>
<gene>
    <name type="primary">23</name>
</gene>
<sequence length="521" mass="56281">MTIKTKAELLNKWKPLLEGEGLPEIANSKQAIIAKIFENQEKDFQTAPEYKDEKIAQAFGSFLTEAEIGGDHGYNATNIAAGQTSGAVTQIGPAVMGMVRRAIPNLIAFDICGVQPMNSPTGQVFALRAVYGKDPIASGAKEAFHPMYGPDAMFSGQGAAKKFAALKASDTLEVGTIYTHFFQDTGTVYLQATEVKQIDTSANDAAKLDAEIKKQMEAGVLVEIAEGMATSIAELQEGFNGSTDNPWNEMGFRIDKQVIEAKSRQLKAAYSIELAQDLRAVHGMDADAELSGILATEIMLEINREVVDWINYSAQVGKSGMTLTPGSKAGVFDFQDPIDIRGARWAGESFKALLFQIDKEAVEIARQTGRGEGNFIIASRNVVNVLASVDTGISYAAQGLATGFNTDTTKSVFAGVLGGKYRVYIDQYAKQDYFTVGYKGPNEMDAGIYYAPYVALTPLRGSDPKNFQPVMGFKTRYGIGINPFAESAAQAPASRIQSGMPSILNSLGKNAYFRRVYVKGI</sequence>
<organismHost>
    <name type="scientific">Escherichia coli O157:H7</name>
    <dbReference type="NCBI Taxonomy" id="83334"/>
</organismHost>
<accession>Q9ZXI0</accession>
<feature type="chain" id="PRO_0000164923" description="Major capsid protein">
    <location>
        <begin position="1"/>
        <end position="521"/>
    </location>
</feature>
<feature type="chain" id="PRO_0000432355" description="Mature major capsid protein">
    <location>
        <begin position="66"/>
        <end position="521"/>
    </location>
</feature>
<feature type="site" description="Cleavage" evidence="2">
    <location>
        <begin position="65"/>
        <end position="66"/>
    </location>
</feature>
<comment type="function">
    <text evidence="1 2">Major capsid protein that self-associates to form hexamers, building most of the capsid in association with pentons made of the capsid vertex protein and one dodecamer of the portal protein. The major capsid protein self-associates to form 160 hexamers, building most of the T=13 laevo capsid. Folding of major capsid protein requires the assistance of two chaperones, the host chaperone groL acting with the phage encoded gp23-specific chaperone, gp31. The capsid also contains two nonessential outer capsid proteins, Hoc and Soc, which decorate the capsid surface. Through binding to adjacent gp23 subunits, Soc reinforces the capsid structure.</text>
</comment>
<comment type="subunit">
    <text evidence="1 2">Homohexamer. Interacts with the portal protein. Interacts with the capsid vertex protein that forms pentamers. Interacts with hoc; one hoc molecule associates with each capsid hexamer. Interacts with soc; this interaction reinforces the capsid structure. A total of 960 subunits of the major capsid protein forms the 160 hexamers.</text>
</comment>
<comment type="subcellular location">
    <molecule>Major capsid protein</molecule>
    <subcellularLocation>
        <location>Virion</location>
    </subcellularLocation>
    <text evidence="2">Part of the capsid icosahedric shell of the immature virion. The capsid is made of 930 copies arranged as 160 hexamers.</text>
</comment>
<comment type="subcellular location">
    <molecule>Mature major capsid protein</molecule>
    <subcellularLocation>
        <location>Virion</location>
    </subcellularLocation>
    <text evidence="2">Part of the capsid icosahedric shell of the mature virion. The capsid is made of 930 copies arranged as 160 hexamers.</text>
</comment>
<comment type="PTM">
    <text evidence="2">A proteolytic cleavage by the prohead core protein protease gives rise to the mature major capsid protein during virus maturation.</text>
</comment>
<comment type="similarity">
    <text evidence="3">Belongs to the T4 phage capsid protein family.</text>
</comment>
<proteinExistence type="inferred from homology"/>
<organism>
    <name type="scientific">Escherichia phage AR1</name>
    <name type="common">Bacteriophage AR1</name>
    <dbReference type="NCBI Taxonomy" id="66711"/>
    <lineage>
        <taxon>Viruses</taxon>
        <taxon>Duplodnaviria</taxon>
        <taxon>Heunggongvirae</taxon>
        <taxon>Uroviricota</taxon>
        <taxon>Caudoviricetes</taxon>
        <taxon>Straboviridae</taxon>
        <taxon>Tevenvirinae</taxon>
        <taxon>Tequatrovirus</taxon>
        <taxon>Tequatrovirus ar1</taxon>
    </lineage>
</organism>